<feature type="chain" id="PRO_1000047661" description="Aminomethyltransferase">
    <location>
        <begin position="1"/>
        <end position="363"/>
    </location>
</feature>
<reference key="1">
    <citation type="journal article" date="2009" name="BMC Genomics">
        <title>Metabolic analysis of the soil microbe Dechloromonas aromatica str. RCB: indications of a surprisingly complex life-style and cryptic anaerobic pathways for aromatic degradation.</title>
        <authorList>
            <person name="Salinero K.K."/>
            <person name="Keller K."/>
            <person name="Feil W.S."/>
            <person name="Feil H."/>
            <person name="Trong S."/>
            <person name="Di Bartolo G."/>
            <person name="Lapidus A."/>
        </authorList>
    </citation>
    <scope>NUCLEOTIDE SEQUENCE [LARGE SCALE GENOMIC DNA]</scope>
    <source>
        <strain>RCB</strain>
    </source>
</reference>
<name>GCST_DECAR</name>
<evidence type="ECO:0000255" key="1">
    <source>
        <dbReference type="HAMAP-Rule" id="MF_00259"/>
    </source>
</evidence>
<organism>
    <name type="scientific">Dechloromonas aromatica (strain RCB)</name>
    <dbReference type="NCBI Taxonomy" id="159087"/>
    <lineage>
        <taxon>Bacteria</taxon>
        <taxon>Pseudomonadati</taxon>
        <taxon>Pseudomonadota</taxon>
        <taxon>Betaproteobacteria</taxon>
        <taxon>Rhodocyclales</taxon>
        <taxon>Azonexaceae</taxon>
        <taxon>Dechloromonas</taxon>
    </lineage>
</organism>
<sequence length="363" mass="39136">MLKKTVLNAAHRAMNARMVDFGGWDMPVNYGSQIEEHNAVRNNCGMFDVSHMCPVDVVGADCRTFLSRLVANDVAKLKVSGKALYAAMLNEAGGVIDDLIIYFLTDTRFRIVVNAGTAEKDLAWMQAKVAEWKLDVTITQRRDGANNLGIIAVQGPNARAKVWEVLPQTKAATAGLKAFFAAEVDQYFIASTGYTGEDGYEIMMPAGEAEALWNKLNAAGVAPCGLGARDTLRLEAGMNLYGQDMDETVSPLDAGLAWTVSLNTDRDFVGKAALVTNGQQKQFLGLILLDKGVLRGHQKVMTKQGDGEITSGSFSPTLQQSIALARLPLGVQIGDEVEVDIRGKALKAKVTKPVFARNGKAVI</sequence>
<proteinExistence type="inferred from homology"/>
<dbReference type="EC" id="2.1.2.10" evidence="1"/>
<dbReference type="EMBL" id="CP000089">
    <property type="protein sequence ID" value="AAZ47198.1"/>
    <property type="molecule type" value="Genomic_DNA"/>
</dbReference>
<dbReference type="SMR" id="Q47D83"/>
<dbReference type="STRING" id="159087.Daro_2463"/>
<dbReference type="KEGG" id="dar:Daro_2463"/>
<dbReference type="eggNOG" id="COG0404">
    <property type="taxonomic scope" value="Bacteria"/>
</dbReference>
<dbReference type="HOGENOM" id="CLU_007884_10_2_4"/>
<dbReference type="OrthoDB" id="9774591at2"/>
<dbReference type="GO" id="GO:0005829">
    <property type="term" value="C:cytosol"/>
    <property type="evidence" value="ECO:0007669"/>
    <property type="project" value="TreeGrafter"/>
</dbReference>
<dbReference type="GO" id="GO:0005960">
    <property type="term" value="C:glycine cleavage complex"/>
    <property type="evidence" value="ECO:0007669"/>
    <property type="project" value="InterPro"/>
</dbReference>
<dbReference type="GO" id="GO:0004047">
    <property type="term" value="F:aminomethyltransferase activity"/>
    <property type="evidence" value="ECO:0007669"/>
    <property type="project" value="UniProtKB-UniRule"/>
</dbReference>
<dbReference type="GO" id="GO:0008483">
    <property type="term" value="F:transaminase activity"/>
    <property type="evidence" value="ECO:0007669"/>
    <property type="project" value="UniProtKB-KW"/>
</dbReference>
<dbReference type="GO" id="GO:0019464">
    <property type="term" value="P:glycine decarboxylation via glycine cleavage system"/>
    <property type="evidence" value="ECO:0007669"/>
    <property type="project" value="UniProtKB-UniRule"/>
</dbReference>
<dbReference type="FunFam" id="3.30.70.1400:FF:000001">
    <property type="entry name" value="Aminomethyltransferase"/>
    <property type="match status" value="1"/>
</dbReference>
<dbReference type="FunFam" id="4.10.1250.10:FF:000001">
    <property type="entry name" value="Aminomethyltransferase"/>
    <property type="match status" value="1"/>
</dbReference>
<dbReference type="Gene3D" id="2.40.30.110">
    <property type="entry name" value="Aminomethyltransferase beta-barrel domains"/>
    <property type="match status" value="1"/>
</dbReference>
<dbReference type="Gene3D" id="3.30.70.1400">
    <property type="entry name" value="Aminomethyltransferase beta-barrel domains"/>
    <property type="match status" value="1"/>
</dbReference>
<dbReference type="Gene3D" id="4.10.1250.10">
    <property type="entry name" value="Aminomethyltransferase fragment"/>
    <property type="match status" value="1"/>
</dbReference>
<dbReference type="Gene3D" id="3.30.1360.120">
    <property type="entry name" value="Probable tRNA modification gtpase trme, domain 1"/>
    <property type="match status" value="1"/>
</dbReference>
<dbReference type="HAMAP" id="MF_00259">
    <property type="entry name" value="GcvT"/>
    <property type="match status" value="1"/>
</dbReference>
<dbReference type="InterPro" id="IPR006223">
    <property type="entry name" value="GCS_T"/>
</dbReference>
<dbReference type="InterPro" id="IPR022903">
    <property type="entry name" value="GCS_T_bac"/>
</dbReference>
<dbReference type="InterPro" id="IPR013977">
    <property type="entry name" value="GCST_C"/>
</dbReference>
<dbReference type="InterPro" id="IPR006222">
    <property type="entry name" value="GCV_T_N"/>
</dbReference>
<dbReference type="InterPro" id="IPR028896">
    <property type="entry name" value="GcvT/YgfZ/DmdA"/>
</dbReference>
<dbReference type="InterPro" id="IPR029043">
    <property type="entry name" value="GcvT/YgfZ_C"/>
</dbReference>
<dbReference type="InterPro" id="IPR027266">
    <property type="entry name" value="TrmE/GcvT_dom1"/>
</dbReference>
<dbReference type="NCBIfam" id="TIGR00528">
    <property type="entry name" value="gcvT"/>
    <property type="match status" value="1"/>
</dbReference>
<dbReference type="NCBIfam" id="NF001567">
    <property type="entry name" value="PRK00389.1"/>
    <property type="match status" value="1"/>
</dbReference>
<dbReference type="PANTHER" id="PTHR43757">
    <property type="entry name" value="AMINOMETHYLTRANSFERASE"/>
    <property type="match status" value="1"/>
</dbReference>
<dbReference type="PANTHER" id="PTHR43757:SF2">
    <property type="entry name" value="AMINOMETHYLTRANSFERASE, MITOCHONDRIAL"/>
    <property type="match status" value="1"/>
</dbReference>
<dbReference type="Pfam" id="PF01571">
    <property type="entry name" value="GCV_T"/>
    <property type="match status" value="1"/>
</dbReference>
<dbReference type="Pfam" id="PF08669">
    <property type="entry name" value="GCV_T_C"/>
    <property type="match status" value="1"/>
</dbReference>
<dbReference type="PIRSF" id="PIRSF006487">
    <property type="entry name" value="GcvT"/>
    <property type="match status" value="1"/>
</dbReference>
<dbReference type="SUPFAM" id="SSF101790">
    <property type="entry name" value="Aminomethyltransferase beta-barrel domain"/>
    <property type="match status" value="1"/>
</dbReference>
<dbReference type="SUPFAM" id="SSF103025">
    <property type="entry name" value="Folate-binding domain"/>
    <property type="match status" value="1"/>
</dbReference>
<protein>
    <recommendedName>
        <fullName evidence="1">Aminomethyltransferase</fullName>
        <ecNumber evidence="1">2.1.2.10</ecNumber>
    </recommendedName>
    <alternativeName>
        <fullName evidence="1">Glycine cleavage system T protein</fullName>
    </alternativeName>
</protein>
<gene>
    <name evidence="1" type="primary">gcvT</name>
    <name type="ordered locus">Daro_2463</name>
</gene>
<accession>Q47D83</accession>
<comment type="function">
    <text evidence="1">The glycine cleavage system catalyzes the degradation of glycine.</text>
</comment>
<comment type="catalytic activity">
    <reaction evidence="1">
        <text>N(6)-[(R)-S(8)-aminomethyldihydrolipoyl]-L-lysyl-[protein] + (6S)-5,6,7,8-tetrahydrofolate = N(6)-[(R)-dihydrolipoyl]-L-lysyl-[protein] + (6R)-5,10-methylene-5,6,7,8-tetrahydrofolate + NH4(+)</text>
        <dbReference type="Rhea" id="RHEA:16945"/>
        <dbReference type="Rhea" id="RHEA-COMP:10475"/>
        <dbReference type="Rhea" id="RHEA-COMP:10492"/>
        <dbReference type="ChEBI" id="CHEBI:15636"/>
        <dbReference type="ChEBI" id="CHEBI:28938"/>
        <dbReference type="ChEBI" id="CHEBI:57453"/>
        <dbReference type="ChEBI" id="CHEBI:83100"/>
        <dbReference type="ChEBI" id="CHEBI:83143"/>
        <dbReference type="EC" id="2.1.2.10"/>
    </reaction>
</comment>
<comment type="subunit">
    <text evidence="1">The glycine cleavage system is composed of four proteins: P, T, L and H.</text>
</comment>
<comment type="similarity">
    <text evidence="1">Belongs to the GcvT family.</text>
</comment>
<keyword id="KW-0032">Aminotransferase</keyword>
<keyword id="KW-0808">Transferase</keyword>